<proteinExistence type="evidence at protein level"/>
<feature type="transit peptide" description="Mitochondrion" evidence="4">
    <location>
        <begin position="1"/>
        <end position="34"/>
    </location>
</feature>
<feature type="chain" id="PRO_0000004236" description="Carbonic anhydrase 5A, mitochondrial">
    <location>
        <begin position="35"/>
        <end position="304"/>
    </location>
</feature>
<feature type="domain" description="Alpha-carbonic anhydrase" evidence="3">
    <location>
        <begin position="35"/>
        <end position="295"/>
    </location>
</feature>
<feature type="binding site" evidence="1">
    <location>
        <position position="129"/>
    </location>
    <ligand>
        <name>Zn(2+)</name>
        <dbReference type="ChEBI" id="CHEBI:29105"/>
        <note>catalytic</note>
    </ligand>
</feature>
<feature type="binding site" evidence="1">
    <location>
        <position position="131"/>
    </location>
    <ligand>
        <name>Zn(2+)</name>
        <dbReference type="ChEBI" id="CHEBI:29105"/>
        <note>catalytic</note>
    </ligand>
</feature>
<feature type="binding site" evidence="1">
    <location>
        <position position="154"/>
    </location>
    <ligand>
        <name>Zn(2+)</name>
        <dbReference type="ChEBI" id="CHEBI:29105"/>
        <note>catalytic</note>
    </ligand>
</feature>
<sequence>MLRAKMLGRGPYKPLAILRHMGPLCATRPQHWRFQHSYAEKHSNCARHPLWTGPVSSPGGTQQSPINIQWTDSVYDPKLAPLRVSYDAASCRYLWNTGYFFQVEFDDSCEESGISGGPLGNHYRLKQFHFHWGATDEWGSEHMVDGHAYPAELHLVHWNSMKYENYKKATTGENGLAVIGVFLKLGAHHEALQRLVDILPEVRHKDTQVTMGPFDPSCLLPACRDYWTYPGSLTTPPLAESVTWIVHKMPIEVSPSQLSTFRTLLFSGRGEDEEVMVNNFRPLQPLRGRNVRSSFQVPRVGTKS</sequence>
<protein>
    <recommendedName>
        <fullName evidence="6">Carbonic anhydrase 5A, mitochondrial</fullName>
        <ecNumber evidence="4">4.2.1.1</ecNumber>
    </recommendedName>
    <alternativeName>
        <fullName>Carbonate dehydratase VA</fullName>
    </alternativeName>
    <alternativeName>
        <fullName>Carbonic anhydrase VA</fullName>
        <shortName>CA-VA</shortName>
    </alternativeName>
</protein>
<reference key="1">
    <citation type="journal article" date="1994" name="Proc. Natl. Acad. Sci. U.S.A.">
        <title>Mitochondrial carbonic anhydrase (isozyme V) in mouse and rat: cDNA cloning, expression, subcellular localization, processing, and tissue distribution.</title>
        <authorList>
            <person name="Nagao Y."/>
            <person name="Srinivasan M."/>
            <person name="Platero J.S."/>
            <person name="Svendrowski M."/>
            <person name="Waheed A."/>
            <person name="Sly W.S."/>
        </authorList>
    </citation>
    <scope>NUCLEOTIDE SEQUENCE [MRNA]</scope>
    <scope>PROTEIN SEQUENCE OF 35-46</scope>
    <scope>TISSUE SPECIFICITY</scope>
    <scope>SUBCELLULAR LOCATION</scope>
    <scope>CATALYTIC ACTIVITY</scope>
    <scope>FUNCTION</scope>
    <source>
        <strain>Sprague-Dawley</strain>
        <tissue>Liver</tissue>
    </source>
</reference>
<reference key="2">
    <citation type="journal article" date="2004" name="Genome Res.">
        <title>The status, quality, and expansion of the NIH full-length cDNA project: the Mammalian Gene Collection (MGC).</title>
        <authorList>
            <consortium name="The MGC Project Team"/>
        </authorList>
    </citation>
    <scope>NUCLEOTIDE SEQUENCE [LARGE SCALE MRNA]</scope>
    <source>
        <tissue>Liver</tissue>
    </source>
</reference>
<organism>
    <name type="scientific">Rattus norvegicus</name>
    <name type="common">Rat</name>
    <dbReference type="NCBI Taxonomy" id="10116"/>
    <lineage>
        <taxon>Eukaryota</taxon>
        <taxon>Metazoa</taxon>
        <taxon>Chordata</taxon>
        <taxon>Craniata</taxon>
        <taxon>Vertebrata</taxon>
        <taxon>Euteleostomi</taxon>
        <taxon>Mammalia</taxon>
        <taxon>Eutheria</taxon>
        <taxon>Euarchontoglires</taxon>
        <taxon>Glires</taxon>
        <taxon>Rodentia</taxon>
        <taxon>Myomorpha</taxon>
        <taxon>Muroidea</taxon>
        <taxon>Muridae</taxon>
        <taxon>Murinae</taxon>
        <taxon>Rattus</taxon>
    </lineage>
</organism>
<keyword id="KW-0903">Direct protein sequencing</keyword>
<keyword id="KW-0456">Lyase</keyword>
<keyword id="KW-0479">Metal-binding</keyword>
<keyword id="KW-0496">Mitochondrion</keyword>
<keyword id="KW-1185">Reference proteome</keyword>
<keyword id="KW-0809">Transit peptide</keyword>
<keyword id="KW-0862">Zinc</keyword>
<accession>P43165</accession>
<dbReference type="EC" id="4.2.1.1" evidence="4"/>
<dbReference type="EMBL" id="U12268">
    <property type="protein sequence ID" value="AAA50832.1"/>
    <property type="molecule type" value="mRNA"/>
</dbReference>
<dbReference type="EMBL" id="BC088147">
    <property type="protein sequence ID" value="AAH88147.1"/>
    <property type="molecule type" value="mRNA"/>
</dbReference>
<dbReference type="PIR" id="I59261">
    <property type="entry name" value="I59261"/>
</dbReference>
<dbReference type="RefSeq" id="NP_062166.1">
    <property type="nucleotide sequence ID" value="NM_019293.3"/>
</dbReference>
<dbReference type="SMR" id="P43165"/>
<dbReference type="FunCoup" id="P43165">
    <property type="interactions" value="56"/>
</dbReference>
<dbReference type="STRING" id="10116.ENSRNOP00000025848"/>
<dbReference type="PhosphoSitePlus" id="P43165"/>
<dbReference type="PaxDb" id="10116-ENSRNOP00000025848"/>
<dbReference type="Ensembl" id="ENSRNOT00000025848.5">
    <property type="protein sequence ID" value="ENSRNOP00000025848.2"/>
    <property type="gene ID" value="ENSRNOG00000019098.5"/>
</dbReference>
<dbReference type="GeneID" id="54233"/>
<dbReference type="KEGG" id="rno:54233"/>
<dbReference type="UCSC" id="RGD:2243">
    <property type="organism name" value="rat"/>
</dbReference>
<dbReference type="AGR" id="RGD:2243"/>
<dbReference type="CTD" id="12352"/>
<dbReference type="RGD" id="2243">
    <property type="gene designation" value="Ca5a"/>
</dbReference>
<dbReference type="eggNOG" id="KOG0382">
    <property type="taxonomic scope" value="Eukaryota"/>
</dbReference>
<dbReference type="GeneTree" id="ENSGT00940000162066"/>
<dbReference type="HOGENOM" id="CLU_039326_2_1_1"/>
<dbReference type="InParanoid" id="P43165"/>
<dbReference type="OMA" id="EKAMVNN"/>
<dbReference type="OrthoDB" id="429145at2759"/>
<dbReference type="PhylomeDB" id="P43165"/>
<dbReference type="TreeFam" id="TF316425"/>
<dbReference type="Reactome" id="R-RNO-1475029">
    <property type="pathway name" value="Reversible hydration of carbon dioxide"/>
</dbReference>
<dbReference type="PRO" id="PR:P43165"/>
<dbReference type="Proteomes" id="UP000002494">
    <property type="component" value="Chromosome 19"/>
</dbReference>
<dbReference type="Bgee" id="ENSRNOG00000019098">
    <property type="expression patterns" value="Expressed in liver and 2 other cell types or tissues"/>
</dbReference>
<dbReference type="GO" id="GO:0005737">
    <property type="term" value="C:cytoplasm"/>
    <property type="evidence" value="ECO:0000318"/>
    <property type="project" value="GO_Central"/>
</dbReference>
<dbReference type="GO" id="GO:0005739">
    <property type="term" value="C:mitochondrion"/>
    <property type="evidence" value="ECO:0000266"/>
    <property type="project" value="RGD"/>
</dbReference>
<dbReference type="GO" id="GO:0004089">
    <property type="term" value="F:carbonate dehydratase activity"/>
    <property type="evidence" value="ECO:0000314"/>
    <property type="project" value="RGD"/>
</dbReference>
<dbReference type="GO" id="GO:0008270">
    <property type="term" value="F:zinc ion binding"/>
    <property type="evidence" value="ECO:0007669"/>
    <property type="project" value="InterPro"/>
</dbReference>
<dbReference type="FunFam" id="3.10.200.10:FF:000001">
    <property type="entry name" value="Carbonic anhydrase 2"/>
    <property type="match status" value="1"/>
</dbReference>
<dbReference type="Gene3D" id="3.10.200.10">
    <property type="entry name" value="Alpha carbonic anhydrase"/>
    <property type="match status" value="1"/>
</dbReference>
<dbReference type="InterPro" id="IPR001148">
    <property type="entry name" value="CA_dom"/>
</dbReference>
<dbReference type="InterPro" id="IPR036398">
    <property type="entry name" value="CA_dom_sf"/>
</dbReference>
<dbReference type="InterPro" id="IPR023561">
    <property type="entry name" value="Carbonic_anhydrase_a-class"/>
</dbReference>
<dbReference type="InterPro" id="IPR018338">
    <property type="entry name" value="Carbonic_anhydrase_a-class_CS"/>
</dbReference>
<dbReference type="PANTHER" id="PTHR18952">
    <property type="entry name" value="CARBONIC ANHYDRASE"/>
    <property type="match status" value="1"/>
</dbReference>
<dbReference type="PANTHER" id="PTHR18952:SF89">
    <property type="entry name" value="CARBONIC ANHYDRASE 5A, MITOCHONDRIAL"/>
    <property type="match status" value="1"/>
</dbReference>
<dbReference type="Pfam" id="PF00194">
    <property type="entry name" value="Carb_anhydrase"/>
    <property type="match status" value="1"/>
</dbReference>
<dbReference type="SMART" id="SM01057">
    <property type="entry name" value="Carb_anhydrase"/>
    <property type="match status" value="1"/>
</dbReference>
<dbReference type="SUPFAM" id="SSF51069">
    <property type="entry name" value="Carbonic anhydrase"/>
    <property type="match status" value="1"/>
</dbReference>
<dbReference type="PROSITE" id="PS00162">
    <property type="entry name" value="ALPHA_CA_1"/>
    <property type="match status" value="1"/>
</dbReference>
<dbReference type="PROSITE" id="PS51144">
    <property type="entry name" value="ALPHA_CA_2"/>
    <property type="match status" value="1"/>
</dbReference>
<gene>
    <name evidence="7" type="primary">Ca5a</name>
    <name type="synonym">Ca5</name>
</gene>
<comment type="function">
    <text evidence="2 4">Mitochondrial carbonic anhydrase that catalyzes the reversible conversion of carbon dioxide to bicarbonate/HCO3 (PubMed:7937950). Mitochondria are impermeable to HCO3, and thus this intramitochondrial carbonic anhydrase is pivotal in providing HCO3 for multiple mitochondrial enzymes that catalyze the formation of essential metabolites of intermediary metabolism in the urea and Krebs cycles (By similarity).</text>
</comment>
<comment type="catalytic activity">
    <reaction evidence="4">
        <text>hydrogencarbonate + H(+) = CO2 + H2O</text>
        <dbReference type="Rhea" id="RHEA:10748"/>
        <dbReference type="ChEBI" id="CHEBI:15377"/>
        <dbReference type="ChEBI" id="CHEBI:15378"/>
        <dbReference type="ChEBI" id="CHEBI:16526"/>
        <dbReference type="ChEBI" id="CHEBI:17544"/>
        <dbReference type="EC" id="4.2.1.1"/>
    </reaction>
    <physiologicalReaction direction="left-to-right" evidence="6">
        <dbReference type="Rhea" id="RHEA:10749"/>
    </physiologicalReaction>
    <physiologicalReaction direction="right-to-left" evidence="6">
        <dbReference type="Rhea" id="RHEA:10750"/>
    </physiologicalReaction>
</comment>
<comment type="cofactor">
    <cofactor evidence="1">
        <name>Zn(2+)</name>
        <dbReference type="ChEBI" id="CHEBI:29105"/>
    </cofactor>
</comment>
<comment type="subcellular location">
    <subcellularLocation>
        <location evidence="4">Mitochondrion</location>
    </subcellularLocation>
</comment>
<comment type="tissue specificity">
    <text evidence="4">High in liver, also detected in heart, lung, kidney, spleen and intestine.</text>
</comment>
<comment type="similarity">
    <text evidence="5">Belongs to the alpha-carbonic anhydrase family.</text>
</comment>
<name>CAH5A_RAT</name>
<evidence type="ECO:0000250" key="1">
    <source>
        <dbReference type="UniProtKB" id="P23589"/>
    </source>
</evidence>
<evidence type="ECO:0000250" key="2">
    <source>
        <dbReference type="UniProtKB" id="P35218"/>
    </source>
</evidence>
<evidence type="ECO:0000255" key="3">
    <source>
        <dbReference type="PROSITE-ProRule" id="PRU01134"/>
    </source>
</evidence>
<evidence type="ECO:0000269" key="4">
    <source>
    </source>
</evidence>
<evidence type="ECO:0000305" key="5"/>
<evidence type="ECO:0000305" key="6">
    <source>
    </source>
</evidence>
<evidence type="ECO:0000312" key="7">
    <source>
        <dbReference type="RGD" id="2243"/>
    </source>
</evidence>